<gene>
    <name evidence="1" type="primary">rpsN</name>
    <name type="ordered locus">YPDSF_0146</name>
</gene>
<reference key="1">
    <citation type="submission" date="2007-02" db="EMBL/GenBank/DDBJ databases">
        <title>Complete sequence of chromosome of Yersinia pestis Pestoides F.</title>
        <authorList>
            <consortium name="US DOE Joint Genome Institute"/>
            <person name="Copeland A."/>
            <person name="Lucas S."/>
            <person name="Lapidus A."/>
            <person name="Barry K."/>
            <person name="Detter J.C."/>
            <person name="Glavina del Rio T."/>
            <person name="Hammon N."/>
            <person name="Israni S."/>
            <person name="Dalin E."/>
            <person name="Tice H."/>
            <person name="Pitluck S."/>
            <person name="Di Bartolo G."/>
            <person name="Chain P."/>
            <person name="Malfatti S."/>
            <person name="Shin M."/>
            <person name="Vergez L."/>
            <person name="Schmutz J."/>
            <person name="Larimer F."/>
            <person name="Land M."/>
            <person name="Hauser L."/>
            <person name="Worsham P."/>
            <person name="Chu M."/>
            <person name="Bearden S."/>
            <person name="Garcia E."/>
            <person name="Richardson P."/>
        </authorList>
    </citation>
    <scope>NUCLEOTIDE SEQUENCE [LARGE SCALE GENOMIC DNA]</scope>
    <source>
        <strain>Pestoides F</strain>
    </source>
</reference>
<keyword id="KW-0687">Ribonucleoprotein</keyword>
<keyword id="KW-0689">Ribosomal protein</keyword>
<keyword id="KW-0694">RNA-binding</keyword>
<keyword id="KW-0699">rRNA-binding</keyword>
<dbReference type="EMBL" id="CP000668">
    <property type="protein sequence ID" value="ABP38568.1"/>
    <property type="molecule type" value="Genomic_DNA"/>
</dbReference>
<dbReference type="RefSeq" id="WP_002213330.1">
    <property type="nucleotide sequence ID" value="NZ_CP009715.1"/>
</dbReference>
<dbReference type="SMR" id="A4TH05"/>
<dbReference type="GeneID" id="96663183"/>
<dbReference type="KEGG" id="ypp:YPDSF_0146"/>
<dbReference type="PATRIC" id="fig|386656.14.peg.421"/>
<dbReference type="GO" id="GO:0005737">
    <property type="term" value="C:cytoplasm"/>
    <property type="evidence" value="ECO:0007669"/>
    <property type="project" value="UniProtKB-ARBA"/>
</dbReference>
<dbReference type="GO" id="GO:0015935">
    <property type="term" value="C:small ribosomal subunit"/>
    <property type="evidence" value="ECO:0007669"/>
    <property type="project" value="TreeGrafter"/>
</dbReference>
<dbReference type="GO" id="GO:0019843">
    <property type="term" value="F:rRNA binding"/>
    <property type="evidence" value="ECO:0007669"/>
    <property type="project" value="UniProtKB-UniRule"/>
</dbReference>
<dbReference type="GO" id="GO:0003735">
    <property type="term" value="F:structural constituent of ribosome"/>
    <property type="evidence" value="ECO:0007669"/>
    <property type="project" value="InterPro"/>
</dbReference>
<dbReference type="GO" id="GO:0006412">
    <property type="term" value="P:translation"/>
    <property type="evidence" value="ECO:0007669"/>
    <property type="project" value="UniProtKB-UniRule"/>
</dbReference>
<dbReference type="FunFam" id="1.10.287.1480:FF:000001">
    <property type="entry name" value="30S ribosomal protein S14"/>
    <property type="match status" value="1"/>
</dbReference>
<dbReference type="Gene3D" id="1.10.287.1480">
    <property type="match status" value="1"/>
</dbReference>
<dbReference type="HAMAP" id="MF_00537">
    <property type="entry name" value="Ribosomal_uS14_1"/>
    <property type="match status" value="1"/>
</dbReference>
<dbReference type="InterPro" id="IPR001209">
    <property type="entry name" value="Ribosomal_uS14"/>
</dbReference>
<dbReference type="InterPro" id="IPR023036">
    <property type="entry name" value="Ribosomal_uS14_bac/plastid"/>
</dbReference>
<dbReference type="InterPro" id="IPR018271">
    <property type="entry name" value="Ribosomal_uS14_CS"/>
</dbReference>
<dbReference type="NCBIfam" id="NF006477">
    <property type="entry name" value="PRK08881.1"/>
    <property type="match status" value="1"/>
</dbReference>
<dbReference type="PANTHER" id="PTHR19836">
    <property type="entry name" value="30S RIBOSOMAL PROTEIN S14"/>
    <property type="match status" value="1"/>
</dbReference>
<dbReference type="PANTHER" id="PTHR19836:SF19">
    <property type="entry name" value="SMALL RIBOSOMAL SUBUNIT PROTEIN US14M"/>
    <property type="match status" value="1"/>
</dbReference>
<dbReference type="Pfam" id="PF00253">
    <property type="entry name" value="Ribosomal_S14"/>
    <property type="match status" value="1"/>
</dbReference>
<dbReference type="SUPFAM" id="SSF57716">
    <property type="entry name" value="Glucocorticoid receptor-like (DNA-binding domain)"/>
    <property type="match status" value="1"/>
</dbReference>
<dbReference type="PROSITE" id="PS00527">
    <property type="entry name" value="RIBOSOMAL_S14"/>
    <property type="match status" value="1"/>
</dbReference>
<feature type="chain" id="PRO_1000128655" description="Small ribosomal subunit protein uS14">
    <location>
        <begin position="1"/>
        <end position="101"/>
    </location>
</feature>
<feature type="region of interest" description="Disordered" evidence="2">
    <location>
        <begin position="49"/>
        <end position="70"/>
    </location>
</feature>
<feature type="compositionally biased region" description="Polar residues" evidence="2">
    <location>
        <begin position="52"/>
        <end position="68"/>
    </location>
</feature>
<comment type="function">
    <text evidence="1">Binds 16S rRNA, required for the assembly of 30S particles and may also be responsible for determining the conformation of the 16S rRNA at the A site.</text>
</comment>
<comment type="subunit">
    <text evidence="1">Part of the 30S ribosomal subunit. Contacts proteins S3 and S10.</text>
</comment>
<comment type="similarity">
    <text evidence="1">Belongs to the universal ribosomal protein uS14 family.</text>
</comment>
<organism>
    <name type="scientific">Yersinia pestis (strain Pestoides F)</name>
    <dbReference type="NCBI Taxonomy" id="386656"/>
    <lineage>
        <taxon>Bacteria</taxon>
        <taxon>Pseudomonadati</taxon>
        <taxon>Pseudomonadota</taxon>
        <taxon>Gammaproteobacteria</taxon>
        <taxon>Enterobacterales</taxon>
        <taxon>Yersiniaceae</taxon>
        <taxon>Yersinia</taxon>
    </lineage>
</organism>
<accession>A4TH05</accession>
<evidence type="ECO:0000255" key="1">
    <source>
        <dbReference type="HAMAP-Rule" id="MF_00537"/>
    </source>
</evidence>
<evidence type="ECO:0000256" key="2">
    <source>
        <dbReference type="SAM" id="MobiDB-lite"/>
    </source>
</evidence>
<evidence type="ECO:0000305" key="3"/>
<sequence>MAKQSMKAREVVRVKLANKYRAKREELKAIISGVNSSDEDRWDAVLKLQSLPRDSSPSRQRNRCNQTGRPHGFLRKFGLSRIKVRETAMRGEIPGLKKASW</sequence>
<name>RS14_YERPP</name>
<proteinExistence type="inferred from homology"/>
<protein>
    <recommendedName>
        <fullName evidence="1">Small ribosomal subunit protein uS14</fullName>
    </recommendedName>
    <alternativeName>
        <fullName evidence="3">30S ribosomal protein S14</fullName>
    </alternativeName>
</protein>